<feature type="chain" id="PRO_1000099465" description="UvrABC system protein C">
    <location>
        <begin position="1"/>
        <end position="674"/>
    </location>
</feature>
<feature type="domain" description="GIY-YIG" evidence="1">
    <location>
        <begin position="22"/>
        <end position="100"/>
    </location>
</feature>
<feature type="domain" description="UVR" evidence="1">
    <location>
        <begin position="209"/>
        <end position="244"/>
    </location>
</feature>
<proteinExistence type="inferred from homology"/>
<comment type="function">
    <text evidence="1">The UvrABC repair system catalyzes the recognition and processing of DNA lesions. UvrC both incises the 5' and 3' sides of the lesion. The N-terminal half is responsible for the 3' incision and the C-terminal half is responsible for the 5' incision.</text>
</comment>
<comment type="subunit">
    <text evidence="1">Interacts with UvrB in an incision complex.</text>
</comment>
<comment type="subcellular location">
    <subcellularLocation>
        <location evidence="1">Cytoplasm</location>
    </subcellularLocation>
</comment>
<comment type="similarity">
    <text evidence="1">Belongs to the UvrC family.</text>
</comment>
<keyword id="KW-0963">Cytoplasm</keyword>
<keyword id="KW-0227">DNA damage</keyword>
<keyword id="KW-0228">DNA excision</keyword>
<keyword id="KW-0234">DNA repair</keyword>
<keyword id="KW-0267">Excision nuclease</keyword>
<keyword id="KW-1185">Reference proteome</keyword>
<keyword id="KW-0742">SOS response</keyword>
<name>UVRC_BURM1</name>
<dbReference type="EMBL" id="CP000868">
    <property type="protein sequence ID" value="ABX15846.1"/>
    <property type="molecule type" value="Genomic_DNA"/>
</dbReference>
<dbReference type="EMBL" id="AP009385">
    <property type="protein sequence ID" value="BAG43024.1"/>
    <property type="molecule type" value="Genomic_DNA"/>
</dbReference>
<dbReference type="RefSeq" id="WP_012213784.1">
    <property type="nucleotide sequence ID" value="NC_010084.1"/>
</dbReference>
<dbReference type="SMR" id="A9ADC9"/>
<dbReference type="STRING" id="395019.BMULJ_01080"/>
<dbReference type="KEGG" id="bmj:BMULJ_01080"/>
<dbReference type="KEGG" id="bmu:Bmul_2161"/>
<dbReference type="eggNOG" id="COG0322">
    <property type="taxonomic scope" value="Bacteria"/>
</dbReference>
<dbReference type="HOGENOM" id="CLU_014841_3_0_4"/>
<dbReference type="Proteomes" id="UP000008815">
    <property type="component" value="Chromosome 1"/>
</dbReference>
<dbReference type="GO" id="GO:0005737">
    <property type="term" value="C:cytoplasm"/>
    <property type="evidence" value="ECO:0007669"/>
    <property type="project" value="UniProtKB-SubCell"/>
</dbReference>
<dbReference type="GO" id="GO:0009380">
    <property type="term" value="C:excinuclease repair complex"/>
    <property type="evidence" value="ECO:0007669"/>
    <property type="project" value="InterPro"/>
</dbReference>
<dbReference type="GO" id="GO:0003677">
    <property type="term" value="F:DNA binding"/>
    <property type="evidence" value="ECO:0007669"/>
    <property type="project" value="UniProtKB-UniRule"/>
</dbReference>
<dbReference type="GO" id="GO:0009381">
    <property type="term" value="F:excinuclease ABC activity"/>
    <property type="evidence" value="ECO:0007669"/>
    <property type="project" value="UniProtKB-UniRule"/>
</dbReference>
<dbReference type="GO" id="GO:0006289">
    <property type="term" value="P:nucleotide-excision repair"/>
    <property type="evidence" value="ECO:0007669"/>
    <property type="project" value="UniProtKB-UniRule"/>
</dbReference>
<dbReference type="GO" id="GO:0009432">
    <property type="term" value="P:SOS response"/>
    <property type="evidence" value="ECO:0007669"/>
    <property type="project" value="UniProtKB-UniRule"/>
</dbReference>
<dbReference type="CDD" id="cd10434">
    <property type="entry name" value="GIY-YIG_UvrC_Cho"/>
    <property type="match status" value="1"/>
</dbReference>
<dbReference type="FunFam" id="3.30.420.340:FF:000001">
    <property type="entry name" value="UvrABC system protein C"/>
    <property type="match status" value="1"/>
</dbReference>
<dbReference type="FunFam" id="3.40.1440.10:FF:000001">
    <property type="entry name" value="UvrABC system protein C"/>
    <property type="match status" value="1"/>
</dbReference>
<dbReference type="Gene3D" id="1.10.150.20">
    <property type="entry name" value="5' to 3' exonuclease, C-terminal subdomain"/>
    <property type="match status" value="1"/>
</dbReference>
<dbReference type="Gene3D" id="3.40.1440.10">
    <property type="entry name" value="GIY-YIG endonuclease"/>
    <property type="match status" value="1"/>
</dbReference>
<dbReference type="Gene3D" id="4.10.860.10">
    <property type="entry name" value="UVR domain"/>
    <property type="match status" value="1"/>
</dbReference>
<dbReference type="Gene3D" id="3.30.420.340">
    <property type="entry name" value="UvrC, RNAse H endonuclease domain"/>
    <property type="match status" value="1"/>
</dbReference>
<dbReference type="HAMAP" id="MF_00203">
    <property type="entry name" value="UvrC"/>
    <property type="match status" value="1"/>
</dbReference>
<dbReference type="InterPro" id="IPR000305">
    <property type="entry name" value="GIY-YIG_endonuc"/>
</dbReference>
<dbReference type="InterPro" id="IPR035901">
    <property type="entry name" value="GIY-YIG_endonuc_sf"/>
</dbReference>
<dbReference type="InterPro" id="IPR047296">
    <property type="entry name" value="GIY-YIG_UvrC_Cho"/>
</dbReference>
<dbReference type="InterPro" id="IPR003583">
    <property type="entry name" value="Hlx-hairpin-Hlx_DNA-bd_motif"/>
</dbReference>
<dbReference type="InterPro" id="IPR010994">
    <property type="entry name" value="RuvA_2-like"/>
</dbReference>
<dbReference type="InterPro" id="IPR001943">
    <property type="entry name" value="UVR_dom"/>
</dbReference>
<dbReference type="InterPro" id="IPR036876">
    <property type="entry name" value="UVR_dom_sf"/>
</dbReference>
<dbReference type="InterPro" id="IPR050066">
    <property type="entry name" value="UvrABC_protein_C"/>
</dbReference>
<dbReference type="InterPro" id="IPR004791">
    <property type="entry name" value="UvrC"/>
</dbReference>
<dbReference type="InterPro" id="IPR001162">
    <property type="entry name" value="UvrC_RNase_H_dom"/>
</dbReference>
<dbReference type="InterPro" id="IPR038476">
    <property type="entry name" value="UvrC_RNase_H_dom_sf"/>
</dbReference>
<dbReference type="NCBIfam" id="NF001824">
    <property type="entry name" value="PRK00558.1-5"/>
    <property type="match status" value="1"/>
</dbReference>
<dbReference type="NCBIfam" id="TIGR00194">
    <property type="entry name" value="uvrC"/>
    <property type="match status" value="1"/>
</dbReference>
<dbReference type="PANTHER" id="PTHR30562:SF1">
    <property type="entry name" value="UVRABC SYSTEM PROTEIN C"/>
    <property type="match status" value="1"/>
</dbReference>
<dbReference type="PANTHER" id="PTHR30562">
    <property type="entry name" value="UVRC/OXIDOREDUCTASE"/>
    <property type="match status" value="1"/>
</dbReference>
<dbReference type="Pfam" id="PF01541">
    <property type="entry name" value="GIY-YIG"/>
    <property type="match status" value="1"/>
</dbReference>
<dbReference type="Pfam" id="PF14520">
    <property type="entry name" value="HHH_5"/>
    <property type="match status" value="1"/>
</dbReference>
<dbReference type="Pfam" id="PF02151">
    <property type="entry name" value="UVR"/>
    <property type="match status" value="1"/>
</dbReference>
<dbReference type="Pfam" id="PF22920">
    <property type="entry name" value="UvrC_RNaseH"/>
    <property type="match status" value="2"/>
</dbReference>
<dbReference type="Pfam" id="PF08459">
    <property type="entry name" value="UvrC_RNaseH_dom"/>
    <property type="match status" value="1"/>
</dbReference>
<dbReference type="SMART" id="SM00465">
    <property type="entry name" value="GIYc"/>
    <property type="match status" value="1"/>
</dbReference>
<dbReference type="SMART" id="SM00278">
    <property type="entry name" value="HhH1"/>
    <property type="match status" value="2"/>
</dbReference>
<dbReference type="SUPFAM" id="SSF46600">
    <property type="entry name" value="C-terminal UvrC-binding domain of UvrB"/>
    <property type="match status" value="1"/>
</dbReference>
<dbReference type="SUPFAM" id="SSF82771">
    <property type="entry name" value="GIY-YIG endonuclease"/>
    <property type="match status" value="1"/>
</dbReference>
<dbReference type="SUPFAM" id="SSF47781">
    <property type="entry name" value="RuvA domain 2-like"/>
    <property type="match status" value="1"/>
</dbReference>
<dbReference type="PROSITE" id="PS50164">
    <property type="entry name" value="GIY_YIG"/>
    <property type="match status" value="1"/>
</dbReference>
<dbReference type="PROSITE" id="PS50151">
    <property type="entry name" value="UVR"/>
    <property type="match status" value="1"/>
</dbReference>
<dbReference type="PROSITE" id="PS50165">
    <property type="entry name" value="UVRC"/>
    <property type="match status" value="1"/>
</dbReference>
<protein>
    <recommendedName>
        <fullName evidence="1">UvrABC system protein C</fullName>
        <shortName evidence="1">Protein UvrC</shortName>
    </recommendedName>
    <alternativeName>
        <fullName evidence="1">Excinuclease ABC subunit C</fullName>
    </alternativeName>
</protein>
<organism>
    <name type="scientific">Burkholderia multivorans (strain ATCC 17616 / 249)</name>
    <dbReference type="NCBI Taxonomy" id="395019"/>
    <lineage>
        <taxon>Bacteria</taxon>
        <taxon>Pseudomonadati</taxon>
        <taxon>Pseudomonadota</taxon>
        <taxon>Betaproteobacteria</taxon>
        <taxon>Burkholderiales</taxon>
        <taxon>Burkholderiaceae</taxon>
        <taxon>Burkholderia</taxon>
        <taxon>Burkholderia cepacia complex</taxon>
    </lineage>
</organism>
<accession>A9ADC9</accession>
<sequence length="674" mass="73764">MTSAEAPDTPFEPKKILAQLPHMPGVYRYYDAAGAVLYVGKARDLKKRVSSYFTKTQLSPRIAMMVTRIARIETTVTRSEAEALLLENNLIKALAPRYNILFRDDKSYPYLKLTSHRFPRMAYYRGAVDKQNQYFGPFPSAWAVRESIQILQRVFQLRTCEDSVFNNRTRPCLLHQIGRCTAPCVGAISAEDYAVDVSNAARFLLGRQSEVMKELEQKMHAFAAELKFEQAAAVRNQMSSLATVLHQQAIEVGSDSDVDILAVVAQGGRVCVNLAMVRGGRHLGDKAYFPTHVESALTLAEGGLGDDTDADAVEAPDVPAEAPVGEPGSARDTTASIEAEVLDAFIAQHYLGNRVPPVLVVSHAPASRDLLELLSEQAGHKVSLVRQPQGQRRAWLSMAEQNAQIALARLLSEQGSQQARTRALAETLGLECDDLATLRIECFDISHTMGEATQASCVVYHHHKMQSGEYRRYNITGITPGDDYAAMRQVLTRRYEKMVEQAAQAAAADDAAGIDGESTRQAEASSLLPNIVLIDGGKGQVEIARQVFTELGLDTSMLVGVAKGEGRKVGLETLVFADGRAPLELGKESAALMLVAQIRDEAHRFAITGMRAKRAKARQTSRLEELEGVGAKRRQRLLARFGGLRGVVAASVEELASVDGISHALAEQIYKQLH</sequence>
<evidence type="ECO:0000255" key="1">
    <source>
        <dbReference type="HAMAP-Rule" id="MF_00203"/>
    </source>
</evidence>
<reference key="1">
    <citation type="submission" date="2007-10" db="EMBL/GenBank/DDBJ databases">
        <title>Complete sequence of chromosome 1 of Burkholderia multivorans ATCC 17616.</title>
        <authorList>
            <person name="Copeland A."/>
            <person name="Lucas S."/>
            <person name="Lapidus A."/>
            <person name="Barry K."/>
            <person name="Glavina del Rio T."/>
            <person name="Dalin E."/>
            <person name="Tice H."/>
            <person name="Pitluck S."/>
            <person name="Chain P."/>
            <person name="Malfatti S."/>
            <person name="Shin M."/>
            <person name="Vergez L."/>
            <person name="Schmutz J."/>
            <person name="Larimer F."/>
            <person name="Land M."/>
            <person name="Hauser L."/>
            <person name="Kyrpides N."/>
            <person name="Kim E."/>
            <person name="Tiedje J."/>
            <person name="Richardson P."/>
        </authorList>
    </citation>
    <scope>NUCLEOTIDE SEQUENCE [LARGE SCALE GENOMIC DNA]</scope>
    <source>
        <strain>ATCC 17616 / 249</strain>
    </source>
</reference>
<reference key="2">
    <citation type="submission" date="2007-04" db="EMBL/GenBank/DDBJ databases">
        <title>Complete genome sequence of Burkholderia multivorans ATCC 17616.</title>
        <authorList>
            <person name="Ohtsubo Y."/>
            <person name="Yamashita A."/>
            <person name="Kurokawa K."/>
            <person name="Takami H."/>
            <person name="Yuhara S."/>
            <person name="Nishiyama E."/>
            <person name="Endo R."/>
            <person name="Miyazaki R."/>
            <person name="Ono A."/>
            <person name="Yano K."/>
            <person name="Ito M."/>
            <person name="Sota M."/>
            <person name="Yuji N."/>
            <person name="Hattori M."/>
            <person name="Tsuda M."/>
        </authorList>
    </citation>
    <scope>NUCLEOTIDE SEQUENCE [LARGE SCALE GENOMIC DNA]</scope>
    <source>
        <strain>ATCC 17616 / 249</strain>
    </source>
</reference>
<gene>
    <name evidence="1" type="primary">uvrC</name>
    <name type="ordered locus">Bmul_2161</name>
    <name type="ordered locus">BMULJ_01080</name>
</gene>